<organism>
    <name type="scientific">Escherichia coli O6:K15:H31 (strain 536 / UPEC)</name>
    <dbReference type="NCBI Taxonomy" id="362663"/>
    <lineage>
        <taxon>Bacteria</taxon>
        <taxon>Pseudomonadati</taxon>
        <taxon>Pseudomonadota</taxon>
        <taxon>Gammaproteobacteria</taxon>
        <taxon>Enterobacterales</taxon>
        <taxon>Enterobacteriaceae</taxon>
        <taxon>Escherichia</taxon>
    </lineage>
</organism>
<protein>
    <recommendedName>
        <fullName evidence="1">Probable GTP-binding protein EngB</fullName>
    </recommendedName>
</protein>
<evidence type="ECO:0000255" key="1">
    <source>
        <dbReference type="HAMAP-Rule" id="MF_00321"/>
    </source>
</evidence>
<evidence type="ECO:0000305" key="2"/>
<comment type="function">
    <text evidence="1">Necessary for normal cell division and for the maintenance of normal septation.</text>
</comment>
<comment type="cofactor">
    <cofactor evidence="1">
        <name>Mg(2+)</name>
        <dbReference type="ChEBI" id="CHEBI:18420"/>
    </cofactor>
</comment>
<comment type="similarity">
    <text evidence="1">Belongs to the TRAFAC class TrmE-Era-EngA-EngB-Septin-like GTPase superfamily. EngB GTPase family.</text>
</comment>
<comment type="sequence caution" evidence="2">
    <conflict type="frameshift">
        <sequence resource="EMBL-CDS" id="ABG72033"/>
    </conflict>
</comment>
<proteinExistence type="inferred from homology"/>
<name>ENGB_ECOL5</name>
<accession>Q0TAJ6</accession>
<reference key="1">
    <citation type="journal article" date="2006" name="Mol. Microbiol.">
        <title>Role of pathogenicity island-associated integrases in the genome plasticity of uropathogenic Escherichia coli strain 536.</title>
        <authorList>
            <person name="Hochhut B."/>
            <person name="Wilde C."/>
            <person name="Balling G."/>
            <person name="Middendorf B."/>
            <person name="Dobrindt U."/>
            <person name="Brzuszkiewicz E."/>
            <person name="Gottschalk G."/>
            <person name="Carniel E."/>
            <person name="Hacker J."/>
        </authorList>
    </citation>
    <scope>NUCLEOTIDE SEQUENCE [LARGE SCALE GENOMIC DNA]</scope>
    <source>
        <strain>536 / UPEC</strain>
    </source>
</reference>
<gene>
    <name evidence="1" type="primary">engB</name>
    <name type="ordered locus">ECP_4075</name>
</gene>
<feature type="chain" id="PRO_0000266861" description="Probable GTP-binding protein EngB">
    <location>
        <begin position="1"/>
        <end position="210"/>
    </location>
</feature>
<feature type="domain" description="EngB-type G" evidence="1">
    <location>
        <begin position="25"/>
        <end position="199"/>
    </location>
</feature>
<feature type="binding site" evidence="1">
    <location>
        <begin position="33"/>
        <end position="40"/>
    </location>
    <ligand>
        <name>GTP</name>
        <dbReference type="ChEBI" id="CHEBI:37565"/>
    </ligand>
</feature>
<feature type="binding site" evidence="1">
    <location>
        <position position="40"/>
    </location>
    <ligand>
        <name>Mg(2+)</name>
        <dbReference type="ChEBI" id="CHEBI:18420"/>
    </ligand>
</feature>
<feature type="binding site" evidence="1">
    <location>
        <begin position="60"/>
        <end position="64"/>
    </location>
    <ligand>
        <name>GTP</name>
        <dbReference type="ChEBI" id="CHEBI:37565"/>
    </ligand>
</feature>
<feature type="binding site" evidence="1">
    <location>
        <position position="62"/>
    </location>
    <ligand>
        <name>Mg(2+)</name>
        <dbReference type="ChEBI" id="CHEBI:18420"/>
    </ligand>
</feature>
<feature type="binding site" evidence="1">
    <location>
        <begin position="78"/>
        <end position="81"/>
    </location>
    <ligand>
        <name>GTP</name>
        <dbReference type="ChEBI" id="CHEBI:37565"/>
    </ligand>
</feature>
<feature type="binding site" evidence="1">
    <location>
        <begin position="145"/>
        <end position="148"/>
    </location>
    <ligand>
        <name>GTP</name>
        <dbReference type="ChEBI" id="CHEBI:37565"/>
    </ligand>
</feature>
<feature type="binding site" evidence="1">
    <location>
        <begin position="178"/>
        <end position="180"/>
    </location>
    <ligand>
        <name>GTP</name>
        <dbReference type="ChEBI" id="CHEBI:37565"/>
    </ligand>
</feature>
<dbReference type="EMBL" id="CP000247">
    <property type="protein sequence ID" value="ABG72033.1"/>
    <property type="status" value="ALT_FRAME"/>
    <property type="molecule type" value="Genomic_DNA"/>
</dbReference>
<dbReference type="SMR" id="Q0TAJ6"/>
<dbReference type="KEGG" id="ecp:ECP_4075"/>
<dbReference type="HOGENOM" id="CLU_033732_1_0_6"/>
<dbReference type="Proteomes" id="UP000009182">
    <property type="component" value="Chromosome"/>
</dbReference>
<dbReference type="GO" id="GO:0005829">
    <property type="term" value="C:cytosol"/>
    <property type="evidence" value="ECO:0007669"/>
    <property type="project" value="TreeGrafter"/>
</dbReference>
<dbReference type="GO" id="GO:0005525">
    <property type="term" value="F:GTP binding"/>
    <property type="evidence" value="ECO:0007669"/>
    <property type="project" value="UniProtKB-UniRule"/>
</dbReference>
<dbReference type="GO" id="GO:0046872">
    <property type="term" value="F:metal ion binding"/>
    <property type="evidence" value="ECO:0007669"/>
    <property type="project" value="UniProtKB-KW"/>
</dbReference>
<dbReference type="GO" id="GO:0000917">
    <property type="term" value="P:division septum assembly"/>
    <property type="evidence" value="ECO:0007669"/>
    <property type="project" value="UniProtKB-KW"/>
</dbReference>
<dbReference type="CDD" id="cd01876">
    <property type="entry name" value="YihA_EngB"/>
    <property type="match status" value="1"/>
</dbReference>
<dbReference type="FunFam" id="3.40.50.300:FF:000098">
    <property type="entry name" value="Probable GTP-binding protein EngB"/>
    <property type="match status" value="1"/>
</dbReference>
<dbReference type="Gene3D" id="3.40.50.300">
    <property type="entry name" value="P-loop containing nucleotide triphosphate hydrolases"/>
    <property type="match status" value="1"/>
</dbReference>
<dbReference type="HAMAP" id="MF_00321">
    <property type="entry name" value="GTPase_EngB"/>
    <property type="match status" value="1"/>
</dbReference>
<dbReference type="InterPro" id="IPR030393">
    <property type="entry name" value="G_ENGB_dom"/>
</dbReference>
<dbReference type="InterPro" id="IPR006073">
    <property type="entry name" value="GTP-bd"/>
</dbReference>
<dbReference type="InterPro" id="IPR019987">
    <property type="entry name" value="GTP-bd_ribosome_bio_YsxC"/>
</dbReference>
<dbReference type="InterPro" id="IPR027417">
    <property type="entry name" value="P-loop_NTPase"/>
</dbReference>
<dbReference type="NCBIfam" id="TIGR03598">
    <property type="entry name" value="GTPase_YsxC"/>
    <property type="match status" value="1"/>
</dbReference>
<dbReference type="PANTHER" id="PTHR11649:SF13">
    <property type="entry name" value="ENGB-TYPE G DOMAIN-CONTAINING PROTEIN"/>
    <property type="match status" value="1"/>
</dbReference>
<dbReference type="PANTHER" id="PTHR11649">
    <property type="entry name" value="MSS1/TRME-RELATED GTP-BINDING PROTEIN"/>
    <property type="match status" value="1"/>
</dbReference>
<dbReference type="Pfam" id="PF01926">
    <property type="entry name" value="MMR_HSR1"/>
    <property type="match status" value="1"/>
</dbReference>
<dbReference type="SUPFAM" id="SSF52540">
    <property type="entry name" value="P-loop containing nucleoside triphosphate hydrolases"/>
    <property type="match status" value="1"/>
</dbReference>
<dbReference type="PROSITE" id="PS51706">
    <property type="entry name" value="G_ENGB"/>
    <property type="match status" value="1"/>
</dbReference>
<keyword id="KW-0131">Cell cycle</keyword>
<keyword id="KW-0132">Cell division</keyword>
<keyword id="KW-0342">GTP-binding</keyword>
<keyword id="KW-0460">Magnesium</keyword>
<keyword id="KW-0479">Metal-binding</keyword>
<keyword id="KW-0547">Nucleotide-binding</keyword>
<keyword id="KW-0717">Septation</keyword>
<sequence length="210" mass="23591">MTNLNYQQTHFVMSAPDIRHLPSDTGIEVAFAGRSNAGKSSALNTLTNQKSLARTSKTPGRTQLINLFEVADGKRLVDLPGYGYAEVPEEMKRKWQRALGEYLEKRQSLQGLVVLMDIRHPLKDLDQQMIEWAVDSNIAVLVLLTKTDKLASGARKAQLNMVREAVLAFNGDVQVETFSSLKKQGVDKLRQKLDTWFSEMQPVEETQDGE</sequence>